<feature type="chain" id="PRO_1000049291" description="Small ribosomal subunit protein bS16">
    <location>
        <begin position="1"/>
        <end position="170"/>
    </location>
</feature>
<feature type="region of interest" description="Disordered" evidence="2">
    <location>
        <begin position="114"/>
        <end position="170"/>
    </location>
</feature>
<feature type="compositionally biased region" description="Low complexity" evidence="2">
    <location>
        <begin position="142"/>
        <end position="170"/>
    </location>
</feature>
<protein>
    <recommendedName>
        <fullName evidence="1">Small ribosomal subunit protein bS16</fullName>
    </recommendedName>
    <alternativeName>
        <fullName evidence="3">30S ribosomal protein S16</fullName>
    </alternativeName>
</protein>
<dbReference type="EMBL" id="CP000479">
    <property type="protein sequence ID" value="ABK65573.1"/>
    <property type="molecule type" value="Genomic_DNA"/>
</dbReference>
<dbReference type="RefSeq" id="WP_011725661.1">
    <property type="nucleotide sequence ID" value="NC_008595.1"/>
</dbReference>
<dbReference type="SMR" id="A0QJ48"/>
<dbReference type="GeneID" id="75271157"/>
<dbReference type="KEGG" id="mav:MAV_3764"/>
<dbReference type="HOGENOM" id="CLU_100590_1_1_11"/>
<dbReference type="Proteomes" id="UP000001574">
    <property type="component" value="Chromosome"/>
</dbReference>
<dbReference type="GO" id="GO:0005737">
    <property type="term" value="C:cytoplasm"/>
    <property type="evidence" value="ECO:0007669"/>
    <property type="project" value="UniProtKB-ARBA"/>
</dbReference>
<dbReference type="GO" id="GO:0015935">
    <property type="term" value="C:small ribosomal subunit"/>
    <property type="evidence" value="ECO:0007669"/>
    <property type="project" value="TreeGrafter"/>
</dbReference>
<dbReference type="GO" id="GO:0003735">
    <property type="term" value="F:structural constituent of ribosome"/>
    <property type="evidence" value="ECO:0007669"/>
    <property type="project" value="InterPro"/>
</dbReference>
<dbReference type="GO" id="GO:0006412">
    <property type="term" value="P:translation"/>
    <property type="evidence" value="ECO:0007669"/>
    <property type="project" value="UniProtKB-UniRule"/>
</dbReference>
<dbReference type="Gene3D" id="3.30.1320.10">
    <property type="match status" value="1"/>
</dbReference>
<dbReference type="HAMAP" id="MF_00385">
    <property type="entry name" value="Ribosomal_bS16"/>
    <property type="match status" value="1"/>
</dbReference>
<dbReference type="InterPro" id="IPR000307">
    <property type="entry name" value="Ribosomal_bS16"/>
</dbReference>
<dbReference type="InterPro" id="IPR020592">
    <property type="entry name" value="Ribosomal_bS16_CS"/>
</dbReference>
<dbReference type="InterPro" id="IPR023803">
    <property type="entry name" value="Ribosomal_bS16_dom_sf"/>
</dbReference>
<dbReference type="NCBIfam" id="NF011093">
    <property type="entry name" value="PRK14520.1"/>
    <property type="match status" value="1"/>
</dbReference>
<dbReference type="NCBIfam" id="TIGR00002">
    <property type="entry name" value="S16"/>
    <property type="match status" value="1"/>
</dbReference>
<dbReference type="PANTHER" id="PTHR12919">
    <property type="entry name" value="30S RIBOSOMAL PROTEIN S16"/>
    <property type="match status" value="1"/>
</dbReference>
<dbReference type="PANTHER" id="PTHR12919:SF20">
    <property type="entry name" value="SMALL RIBOSOMAL SUBUNIT PROTEIN BS16M"/>
    <property type="match status" value="1"/>
</dbReference>
<dbReference type="Pfam" id="PF00886">
    <property type="entry name" value="Ribosomal_S16"/>
    <property type="match status" value="1"/>
</dbReference>
<dbReference type="SUPFAM" id="SSF54565">
    <property type="entry name" value="Ribosomal protein S16"/>
    <property type="match status" value="1"/>
</dbReference>
<dbReference type="PROSITE" id="PS00732">
    <property type="entry name" value="RIBOSOMAL_S16"/>
    <property type="match status" value="1"/>
</dbReference>
<keyword id="KW-0687">Ribonucleoprotein</keyword>
<keyword id="KW-0689">Ribosomal protein</keyword>
<gene>
    <name evidence="1" type="primary">rpsP</name>
    <name type="ordered locus">MAV_3764</name>
</gene>
<name>RS16_MYCA1</name>
<sequence>MAVKIKLTRLGKIRNPQYRIAVADARTRRDGRSIEIIGRYHPKEDPSLIEINSERAQYWLSVGAQPTEPVLKLLKITGDWQKFKGLPGAEGRLKVAPPKPSKLELFNAALAEAEGGPTTEAAKPKKKAATSGAKKAAKAAEPEAAAPEAAEPEAAAPAEGGEQAESSTES</sequence>
<proteinExistence type="inferred from homology"/>
<accession>A0QJ48</accession>
<evidence type="ECO:0000255" key="1">
    <source>
        <dbReference type="HAMAP-Rule" id="MF_00385"/>
    </source>
</evidence>
<evidence type="ECO:0000256" key="2">
    <source>
        <dbReference type="SAM" id="MobiDB-lite"/>
    </source>
</evidence>
<evidence type="ECO:0000305" key="3"/>
<organism>
    <name type="scientific">Mycobacterium avium (strain 104)</name>
    <dbReference type="NCBI Taxonomy" id="243243"/>
    <lineage>
        <taxon>Bacteria</taxon>
        <taxon>Bacillati</taxon>
        <taxon>Actinomycetota</taxon>
        <taxon>Actinomycetes</taxon>
        <taxon>Mycobacteriales</taxon>
        <taxon>Mycobacteriaceae</taxon>
        <taxon>Mycobacterium</taxon>
        <taxon>Mycobacterium avium complex (MAC)</taxon>
    </lineage>
</organism>
<reference key="1">
    <citation type="submission" date="2006-10" db="EMBL/GenBank/DDBJ databases">
        <authorList>
            <person name="Fleischmann R.D."/>
            <person name="Dodson R.J."/>
            <person name="Haft D.H."/>
            <person name="Merkel J.S."/>
            <person name="Nelson W.C."/>
            <person name="Fraser C.M."/>
        </authorList>
    </citation>
    <scope>NUCLEOTIDE SEQUENCE [LARGE SCALE GENOMIC DNA]</scope>
    <source>
        <strain>104</strain>
    </source>
</reference>
<comment type="similarity">
    <text evidence="1">Belongs to the bacterial ribosomal protein bS16 family.</text>
</comment>